<dbReference type="EMBL" id="BC097494">
    <property type="protein sequence ID" value="AAH97494.1"/>
    <property type="molecule type" value="mRNA"/>
</dbReference>
<dbReference type="RefSeq" id="NP_001020069.1">
    <property type="nucleotide sequence ID" value="NM_001024898.1"/>
</dbReference>
<dbReference type="SMR" id="Q4V886"/>
<dbReference type="FunCoup" id="Q4V886">
    <property type="interactions" value="4124"/>
</dbReference>
<dbReference type="STRING" id="10116.ENSRNOP00000026778"/>
<dbReference type="iPTMnet" id="Q4V886"/>
<dbReference type="PhosphoSitePlus" id="Q4V886"/>
<dbReference type="jPOST" id="Q4V886"/>
<dbReference type="PaxDb" id="10116-ENSRNOP00000026778"/>
<dbReference type="Ensembl" id="ENSRNOT00000026778.7">
    <property type="protein sequence ID" value="ENSRNOP00000026778.5"/>
    <property type="gene ID" value="ENSRNOG00000019746.7"/>
</dbReference>
<dbReference type="GeneID" id="361531"/>
<dbReference type="KEGG" id="rno:361531"/>
<dbReference type="UCSC" id="RGD:1306219">
    <property type="organism name" value="rat"/>
</dbReference>
<dbReference type="AGR" id="RGD:1306219"/>
<dbReference type="CTD" id="54623"/>
<dbReference type="RGD" id="1306219">
    <property type="gene designation" value="Paf1"/>
</dbReference>
<dbReference type="eggNOG" id="KOG2478">
    <property type="taxonomic scope" value="Eukaryota"/>
</dbReference>
<dbReference type="GeneTree" id="ENSGT00390000001474"/>
<dbReference type="HOGENOM" id="CLU_021991_2_0_1"/>
<dbReference type="InParanoid" id="Q4V886"/>
<dbReference type="OMA" id="LVCRIKY"/>
<dbReference type="OrthoDB" id="10260285at2759"/>
<dbReference type="PhylomeDB" id="Q4V886"/>
<dbReference type="TreeFam" id="TF313642"/>
<dbReference type="Reactome" id="R-RNO-112382">
    <property type="pathway name" value="Formation of RNA Pol II elongation complex"/>
</dbReference>
<dbReference type="Reactome" id="R-RNO-674695">
    <property type="pathway name" value="RNA Polymerase II Pre-transcription Events"/>
</dbReference>
<dbReference type="Reactome" id="R-RNO-75955">
    <property type="pathway name" value="RNA Polymerase II Transcription Elongation"/>
</dbReference>
<dbReference type="Reactome" id="R-RNO-8866654">
    <property type="pathway name" value="E3 ubiquitin ligases ubiquitinate target proteins"/>
</dbReference>
<dbReference type="PRO" id="PR:Q4V886"/>
<dbReference type="Proteomes" id="UP000002494">
    <property type="component" value="Chromosome 1"/>
</dbReference>
<dbReference type="Bgee" id="ENSRNOG00000019746">
    <property type="expression patterns" value="Expressed in ovary and 20 other cell types or tissues"/>
</dbReference>
<dbReference type="GO" id="GO:0016593">
    <property type="term" value="C:Cdc73/Paf1 complex"/>
    <property type="evidence" value="ECO:0000250"/>
    <property type="project" value="UniProtKB"/>
</dbReference>
<dbReference type="GO" id="GO:0005737">
    <property type="term" value="C:cytoplasm"/>
    <property type="evidence" value="ECO:0000266"/>
    <property type="project" value="RGD"/>
</dbReference>
<dbReference type="GO" id="GO:0001650">
    <property type="term" value="C:fibrillar center"/>
    <property type="evidence" value="ECO:0007669"/>
    <property type="project" value="Ensembl"/>
</dbReference>
<dbReference type="GO" id="GO:0016020">
    <property type="term" value="C:membrane"/>
    <property type="evidence" value="ECO:0000266"/>
    <property type="project" value="RGD"/>
</dbReference>
<dbReference type="GO" id="GO:0003682">
    <property type="term" value="F:chromatin binding"/>
    <property type="evidence" value="ECO:0000266"/>
    <property type="project" value="RGD"/>
</dbReference>
<dbReference type="GO" id="GO:0000993">
    <property type="term" value="F:RNA polymerase II complex binding"/>
    <property type="evidence" value="ECO:0000250"/>
    <property type="project" value="UniProtKB"/>
</dbReference>
<dbReference type="GO" id="GO:0071222">
    <property type="term" value="P:cellular response to lipopolysaccharide"/>
    <property type="evidence" value="ECO:0000250"/>
    <property type="project" value="UniProtKB"/>
</dbReference>
<dbReference type="GO" id="GO:0001711">
    <property type="term" value="P:endodermal cell fate commitment"/>
    <property type="evidence" value="ECO:0000250"/>
    <property type="project" value="UniProtKB"/>
</dbReference>
<dbReference type="GO" id="GO:0031124">
    <property type="term" value="P:mRNA 3'-end processing"/>
    <property type="evidence" value="ECO:0000250"/>
    <property type="project" value="UniProtKB"/>
</dbReference>
<dbReference type="GO" id="GO:0045638">
    <property type="term" value="P:negative regulation of myeloid cell differentiation"/>
    <property type="evidence" value="ECO:0000250"/>
    <property type="project" value="UniProtKB"/>
</dbReference>
<dbReference type="GO" id="GO:0000122">
    <property type="term" value="P:negative regulation of transcription by RNA polymerase II"/>
    <property type="evidence" value="ECO:0000250"/>
    <property type="project" value="UniProtKB"/>
</dbReference>
<dbReference type="GO" id="GO:1902808">
    <property type="term" value="P:positive regulation of cell cycle G1/S phase transition"/>
    <property type="evidence" value="ECO:0000250"/>
    <property type="project" value="UniProtKB"/>
</dbReference>
<dbReference type="GO" id="GO:0045944">
    <property type="term" value="P:positive regulation of transcription by RNA polymerase II"/>
    <property type="evidence" value="ECO:0000266"/>
    <property type="project" value="RGD"/>
</dbReference>
<dbReference type="GO" id="GO:0034504">
    <property type="term" value="P:protein localization to nucleus"/>
    <property type="evidence" value="ECO:0000266"/>
    <property type="project" value="RGD"/>
</dbReference>
<dbReference type="GO" id="GO:0019827">
    <property type="term" value="P:stem cell population maintenance"/>
    <property type="evidence" value="ECO:0000266"/>
    <property type="project" value="RGD"/>
</dbReference>
<dbReference type="GO" id="GO:0006368">
    <property type="term" value="P:transcription elongation by RNA polymerase II"/>
    <property type="evidence" value="ECO:0000250"/>
    <property type="project" value="UniProtKB"/>
</dbReference>
<dbReference type="GO" id="GO:0016055">
    <property type="term" value="P:Wnt signaling pathway"/>
    <property type="evidence" value="ECO:0007669"/>
    <property type="project" value="UniProtKB-KW"/>
</dbReference>
<dbReference type="InterPro" id="IPR007133">
    <property type="entry name" value="RNA_pol_II-assoc_Paf1"/>
</dbReference>
<dbReference type="PANTHER" id="PTHR23188">
    <property type="entry name" value="RNA POLYMERASE II-ASSOCIATED FACTOR 1 HOMOLOG"/>
    <property type="match status" value="1"/>
</dbReference>
<dbReference type="PANTHER" id="PTHR23188:SF12">
    <property type="entry name" value="RNA POLYMERASE II-ASSOCIATED FACTOR 1 HOMOLOG"/>
    <property type="match status" value="1"/>
</dbReference>
<dbReference type="Pfam" id="PF03985">
    <property type="entry name" value="Paf1"/>
    <property type="match status" value="1"/>
</dbReference>
<feature type="chain" id="PRO_0000326403" description="RNA polymerase II-associated factor 1 homolog">
    <location>
        <begin position="1"/>
        <end position="535"/>
    </location>
</feature>
<feature type="region of interest" description="Disordered" evidence="5">
    <location>
        <begin position="1"/>
        <end position="23"/>
    </location>
</feature>
<feature type="region of interest" description="Disordered" evidence="5">
    <location>
        <begin position="361"/>
        <end position="535"/>
    </location>
</feature>
<feature type="coiled-coil region" evidence="4">
    <location>
        <begin position="352"/>
        <end position="400"/>
    </location>
</feature>
<feature type="compositionally biased region" description="Basic and acidic residues" evidence="5">
    <location>
        <begin position="361"/>
        <end position="374"/>
    </location>
</feature>
<feature type="compositionally biased region" description="Acidic residues" evidence="5">
    <location>
        <begin position="375"/>
        <end position="388"/>
    </location>
</feature>
<feature type="compositionally biased region" description="Basic and acidic residues" evidence="5">
    <location>
        <begin position="389"/>
        <end position="434"/>
    </location>
</feature>
<feature type="compositionally biased region" description="Basic and acidic residues" evidence="5">
    <location>
        <begin position="442"/>
        <end position="453"/>
    </location>
</feature>
<feature type="compositionally biased region" description="Acidic residues" evidence="5">
    <location>
        <begin position="458"/>
        <end position="470"/>
    </location>
</feature>
<feature type="compositionally biased region" description="Low complexity" evidence="5">
    <location>
        <begin position="502"/>
        <end position="511"/>
    </location>
</feature>
<feature type="modified residue" description="Phosphoserine" evidence="3">
    <location>
        <position position="117"/>
    </location>
</feature>
<feature type="modified residue" description="Phosphoserine" evidence="2">
    <location>
        <position position="456"/>
    </location>
</feature>
<feature type="cross-link" description="Glycyl lysine isopeptide (Lys-Gly) (interchain with G-Cter in SUMO2)" evidence="3">
    <location>
        <position position="133"/>
    </location>
</feature>
<feature type="cross-link" description="Glycyl lysine isopeptide (Lys-Gly) (interchain with G-Cter in SUMO2)" evidence="3">
    <location>
        <position position="154"/>
    </location>
</feature>
<proteinExistence type="evidence at transcript level"/>
<keyword id="KW-0175">Coiled coil</keyword>
<keyword id="KW-1017">Isopeptide bond</keyword>
<keyword id="KW-0539">Nucleus</keyword>
<keyword id="KW-0597">Phosphoprotein</keyword>
<keyword id="KW-1185">Reference proteome</keyword>
<keyword id="KW-0804">Transcription</keyword>
<keyword id="KW-0805">Transcription regulation</keyword>
<keyword id="KW-0832">Ubl conjugation</keyword>
<keyword id="KW-0879">Wnt signaling pathway</keyword>
<accession>Q4V886</accession>
<evidence type="ECO:0000250" key="1"/>
<evidence type="ECO:0000250" key="2">
    <source>
        <dbReference type="UniProtKB" id="Q8K2T8"/>
    </source>
</evidence>
<evidence type="ECO:0000250" key="3">
    <source>
        <dbReference type="UniProtKB" id="Q8N7H5"/>
    </source>
</evidence>
<evidence type="ECO:0000255" key="4"/>
<evidence type="ECO:0000256" key="5">
    <source>
        <dbReference type="SAM" id="MobiDB-lite"/>
    </source>
</evidence>
<evidence type="ECO:0000305" key="6"/>
<sequence length="535" mass="60546">MAPTIQTQAQREDGHRPNSHRTLPERSGVVCRVKYCNSLPDIPFDPKFITYPFDQNRFVQYKATSLEKQHKHDLLTEPDLGVTIDLINPDTYRIDPNVLLDPADEKLLEEEIQAPTSSKRSQQHAKVVPWMRKTEYISTEFNRYGISNEKPEVKIGVSVKQQFTEEEIYKDRDSQITAIEKTFEDAQKSISQHYSKPRVTPVEVMPVFPDFKMWINPCAQVIFDSDPAPKDTSGAAALEMMSQAMIRGMMDEEGNQFVAYFLPVEETLKKRKRDQEEEMDYAPDDVYDYKIAREYNWNVKNKASKGYEENYFFIFREGDGVYYNELETRVRLSKRRAKAGVQSGTNALLVVKHRDMNEKELEAQEARKAQLENHEPEEEEEEEMEAEEKEAGGSDEEHEKGSSSEKEGSEDERSGSESDREEGDRDEASDKSGSGEDESSEDEARAARDKEEIFGSDADSEDDADSDDEDRGQAHRGSDNDSDSGSDGGGQRSRSQSRSRSRSASPFPSGSEHSAQEDGSEAAASDSSEADSDSD</sequence>
<gene>
    <name type="primary">Paf1</name>
</gene>
<organism>
    <name type="scientific">Rattus norvegicus</name>
    <name type="common">Rat</name>
    <dbReference type="NCBI Taxonomy" id="10116"/>
    <lineage>
        <taxon>Eukaryota</taxon>
        <taxon>Metazoa</taxon>
        <taxon>Chordata</taxon>
        <taxon>Craniata</taxon>
        <taxon>Vertebrata</taxon>
        <taxon>Euteleostomi</taxon>
        <taxon>Mammalia</taxon>
        <taxon>Eutheria</taxon>
        <taxon>Euarchontoglires</taxon>
        <taxon>Glires</taxon>
        <taxon>Rodentia</taxon>
        <taxon>Myomorpha</taxon>
        <taxon>Muroidea</taxon>
        <taxon>Muridae</taxon>
        <taxon>Murinae</taxon>
        <taxon>Rattus</taxon>
    </lineage>
</organism>
<reference key="1">
    <citation type="journal article" date="2004" name="Genome Res.">
        <title>The status, quality, and expansion of the NIH full-length cDNA project: the Mammalian Gene Collection (MGC).</title>
        <authorList>
            <consortium name="The MGC Project Team"/>
        </authorList>
    </citation>
    <scope>NUCLEOTIDE SEQUENCE [LARGE SCALE MRNA]</scope>
    <source>
        <tissue>Placenta</tissue>
    </source>
</reference>
<name>PAF1_RAT</name>
<comment type="function">
    <text evidence="1">Component of the PAF1 complex (PAF1C) which has multiple functions during transcription by RNA polymerase II and is implicated in regulation of development and maintenance of embryonic stem cell pluripotency. PAF1C associates with RNA polymerase II through interaction with POLR2A CTD non-phosphorylated and 'Ser-2'- and 'Ser-5'-phosphorylated forms and is involved in transcriptional elongation, acting both independently and synergistically with TCEA1 and in cooperation with the DSIF complex and HTATSF1. PAF1C is required for transcription of Hox and Wnt target genes. PAF1C is involved in hematopoiesis and stimulates transcriptional activity of KMT2A/MLL1. PAF1C is involved in histone modifications such as ubiquitination of histone H2B and methylation on histone H3 'Lys-4' (H3K4me3). PAF1C recruits the RNF20/40 E3 ubiquitin-protein ligase complex and the E2 enzyme UBE2A or UBE2B to chromatin which mediate monoubiquitination of 'Lys-120' of histone H2B (H2BK120ub1); UB2A/B-mediated H2B ubiquitination is proposed to be coupled to transcription. PAF1C is involved in mRNA 3' end formation probably through association with cleavage and poly(A) factors. Connects PAF1C with the RNF20/40 E3 ubiquitin-protein ligase complex. Involved in polyadenylation of mRNA precursors (By similarity).</text>
</comment>
<comment type="subunit">
    <text evidence="2 3">Component of the PAF1 complex, which consists of CDC73, PAF1, LEO1, CTR9, RTF1 and SKIC8 (By similarity). The PAF1 complex interacts with PHF5A (By similarity). Interacts with POLR2A, TCEA1, SKIC3, KMT2A/MLL1, SUPT5H, RNF20 and RNF40. Interacts with UBE2E1 (By similarity).</text>
</comment>
<comment type="subcellular location">
    <subcellularLocation>
        <location>Nucleus</location>
    </subcellularLocation>
    <text evidence="1">Punctuate distribution throughout the nucleus except in nucleoli and the perinuclear chromatin.</text>
</comment>
<comment type="similarity">
    <text evidence="6">Belongs to the PAF1 family.</text>
</comment>
<protein>
    <recommendedName>
        <fullName>RNA polymerase II-associated factor 1 homolog</fullName>
    </recommendedName>
</protein>